<comment type="subcellular location">
    <subcellularLocation>
        <location evidence="3">Mitochondrion</location>
    </subcellularLocation>
</comment>
<comment type="similarity">
    <text evidence="2">Belongs to the PPR family. P subfamily.</text>
</comment>
<comment type="sequence caution" evidence="2">
    <conflict type="erroneous initiation">
        <sequence resource="EMBL-CDS" id="AAG51690"/>
    </conflict>
</comment>
<comment type="online information" name="Pentatricopeptide repeat proteins">
    <link uri="https://ppr.plantenergy.uwa.edu.au"/>
</comment>
<evidence type="ECO:0000269" key="1">
    <source>
    </source>
</evidence>
<evidence type="ECO:0000305" key="2"/>
<evidence type="ECO:0000305" key="3">
    <source>
    </source>
</evidence>
<protein>
    <recommendedName>
        <fullName>Pentatricopeptide repeat-containing protein At1g71210, mitochondrial</fullName>
    </recommendedName>
</protein>
<proteinExistence type="evidence at protein level"/>
<organism>
    <name type="scientific">Arabidopsis thaliana</name>
    <name type="common">Mouse-ear cress</name>
    <dbReference type="NCBI Taxonomy" id="3702"/>
    <lineage>
        <taxon>Eukaryota</taxon>
        <taxon>Viridiplantae</taxon>
        <taxon>Streptophyta</taxon>
        <taxon>Embryophyta</taxon>
        <taxon>Tracheophyta</taxon>
        <taxon>Spermatophyta</taxon>
        <taxon>Magnoliopsida</taxon>
        <taxon>eudicotyledons</taxon>
        <taxon>Gunneridae</taxon>
        <taxon>Pentapetalae</taxon>
        <taxon>rosids</taxon>
        <taxon>malvids</taxon>
        <taxon>Brassicales</taxon>
        <taxon>Brassicaceae</taxon>
        <taxon>Camelineae</taxon>
        <taxon>Arabidopsis</taxon>
    </lineage>
</organism>
<reference key="1">
    <citation type="journal article" date="2000" name="Nature">
        <title>Sequence and analysis of chromosome 1 of the plant Arabidopsis thaliana.</title>
        <authorList>
            <person name="Theologis A."/>
            <person name="Ecker J.R."/>
            <person name="Palm C.J."/>
            <person name="Federspiel N.A."/>
            <person name="Kaul S."/>
            <person name="White O."/>
            <person name="Alonso J."/>
            <person name="Altafi H."/>
            <person name="Araujo R."/>
            <person name="Bowman C.L."/>
            <person name="Brooks S.Y."/>
            <person name="Buehler E."/>
            <person name="Chan A."/>
            <person name="Chao Q."/>
            <person name="Chen H."/>
            <person name="Cheuk R.F."/>
            <person name="Chin C.W."/>
            <person name="Chung M.K."/>
            <person name="Conn L."/>
            <person name="Conway A.B."/>
            <person name="Conway A.R."/>
            <person name="Creasy T.H."/>
            <person name="Dewar K."/>
            <person name="Dunn P."/>
            <person name="Etgu P."/>
            <person name="Feldblyum T.V."/>
            <person name="Feng J.-D."/>
            <person name="Fong B."/>
            <person name="Fujii C.Y."/>
            <person name="Gill J.E."/>
            <person name="Goldsmith A.D."/>
            <person name="Haas B."/>
            <person name="Hansen N.F."/>
            <person name="Hughes B."/>
            <person name="Huizar L."/>
            <person name="Hunter J.L."/>
            <person name="Jenkins J."/>
            <person name="Johnson-Hopson C."/>
            <person name="Khan S."/>
            <person name="Khaykin E."/>
            <person name="Kim C.J."/>
            <person name="Koo H.L."/>
            <person name="Kremenetskaia I."/>
            <person name="Kurtz D.B."/>
            <person name="Kwan A."/>
            <person name="Lam B."/>
            <person name="Langin-Hooper S."/>
            <person name="Lee A."/>
            <person name="Lee J.M."/>
            <person name="Lenz C.A."/>
            <person name="Li J.H."/>
            <person name="Li Y.-P."/>
            <person name="Lin X."/>
            <person name="Liu S.X."/>
            <person name="Liu Z.A."/>
            <person name="Luros J.S."/>
            <person name="Maiti R."/>
            <person name="Marziali A."/>
            <person name="Militscher J."/>
            <person name="Miranda M."/>
            <person name="Nguyen M."/>
            <person name="Nierman W.C."/>
            <person name="Osborne B.I."/>
            <person name="Pai G."/>
            <person name="Peterson J."/>
            <person name="Pham P.K."/>
            <person name="Rizzo M."/>
            <person name="Rooney T."/>
            <person name="Rowley D."/>
            <person name="Sakano H."/>
            <person name="Salzberg S.L."/>
            <person name="Schwartz J.R."/>
            <person name="Shinn P."/>
            <person name="Southwick A.M."/>
            <person name="Sun H."/>
            <person name="Tallon L.J."/>
            <person name="Tambunga G."/>
            <person name="Toriumi M.J."/>
            <person name="Town C.D."/>
            <person name="Utterback T."/>
            <person name="Van Aken S."/>
            <person name="Vaysberg M."/>
            <person name="Vysotskaia V.S."/>
            <person name="Walker M."/>
            <person name="Wu D."/>
            <person name="Yu G."/>
            <person name="Fraser C.M."/>
            <person name="Venter J.C."/>
            <person name="Davis R.W."/>
        </authorList>
    </citation>
    <scope>NUCLEOTIDE SEQUENCE [LARGE SCALE GENOMIC DNA]</scope>
    <source>
        <strain>cv. Columbia</strain>
    </source>
</reference>
<reference key="2">
    <citation type="journal article" date="2017" name="Plant J.">
        <title>Araport11: a complete reannotation of the Arabidopsis thaliana reference genome.</title>
        <authorList>
            <person name="Cheng C.Y."/>
            <person name="Krishnakumar V."/>
            <person name="Chan A.P."/>
            <person name="Thibaud-Nissen F."/>
            <person name="Schobel S."/>
            <person name="Town C.D."/>
        </authorList>
    </citation>
    <scope>GENOME REANNOTATION</scope>
    <source>
        <strain>cv. Columbia</strain>
    </source>
</reference>
<reference key="3">
    <citation type="journal article" date="2002" name="Science">
        <title>Functional annotation of a full-length Arabidopsis cDNA collection.</title>
        <authorList>
            <person name="Seki M."/>
            <person name="Narusaka M."/>
            <person name="Kamiya A."/>
            <person name="Ishida J."/>
            <person name="Satou M."/>
            <person name="Sakurai T."/>
            <person name="Nakajima M."/>
            <person name="Enju A."/>
            <person name="Akiyama K."/>
            <person name="Oono Y."/>
            <person name="Muramatsu M."/>
            <person name="Hayashizaki Y."/>
            <person name="Kawai J."/>
            <person name="Carninci P."/>
            <person name="Itoh M."/>
            <person name="Ishii Y."/>
            <person name="Arakawa T."/>
            <person name="Shibata K."/>
            <person name="Shinagawa A."/>
            <person name="Shinozaki K."/>
        </authorList>
    </citation>
    <scope>NUCLEOTIDE SEQUENCE [LARGE SCALE MRNA]</scope>
    <source>
        <strain>cv. Columbia</strain>
    </source>
</reference>
<reference key="4">
    <citation type="journal article" date="2003" name="Science">
        <title>Empirical analysis of transcriptional activity in the Arabidopsis genome.</title>
        <authorList>
            <person name="Yamada K."/>
            <person name="Lim J."/>
            <person name="Dale J.M."/>
            <person name="Chen H."/>
            <person name="Shinn P."/>
            <person name="Palm C.J."/>
            <person name="Southwick A.M."/>
            <person name="Wu H.C."/>
            <person name="Kim C.J."/>
            <person name="Nguyen M."/>
            <person name="Pham P.K."/>
            <person name="Cheuk R.F."/>
            <person name="Karlin-Newmann G."/>
            <person name="Liu S.X."/>
            <person name="Lam B."/>
            <person name="Sakano H."/>
            <person name="Wu T."/>
            <person name="Yu G."/>
            <person name="Miranda M."/>
            <person name="Quach H.L."/>
            <person name="Tripp M."/>
            <person name="Chang C.H."/>
            <person name="Lee J.M."/>
            <person name="Toriumi M.J."/>
            <person name="Chan M.M."/>
            <person name="Tang C.C."/>
            <person name="Onodera C.S."/>
            <person name="Deng J.M."/>
            <person name="Akiyama K."/>
            <person name="Ansari Y."/>
            <person name="Arakawa T."/>
            <person name="Banh J."/>
            <person name="Banno F."/>
            <person name="Bowser L."/>
            <person name="Brooks S.Y."/>
            <person name="Carninci P."/>
            <person name="Chao Q."/>
            <person name="Choy N."/>
            <person name="Enju A."/>
            <person name="Goldsmith A.D."/>
            <person name="Gurjal M."/>
            <person name="Hansen N.F."/>
            <person name="Hayashizaki Y."/>
            <person name="Johnson-Hopson C."/>
            <person name="Hsuan V.W."/>
            <person name="Iida K."/>
            <person name="Karnes M."/>
            <person name="Khan S."/>
            <person name="Koesema E."/>
            <person name="Ishida J."/>
            <person name="Jiang P.X."/>
            <person name="Jones T."/>
            <person name="Kawai J."/>
            <person name="Kamiya A."/>
            <person name="Meyers C."/>
            <person name="Nakajima M."/>
            <person name="Narusaka M."/>
            <person name="Seki M."/>
            <person name="Sakurai T."/>
            <person name="Satou M."/>
            <person name="Tamse R."/>
            <person name="Vaysberg M."/>
            <person name="Wallender E.K."/>
            <person name="Wong C."/>
            <person name="Yamamura Y."/>
            <person name="Yuan S."/>
            <person name="Shinozaki K."/>
            <person name="Davis R.W."/>
            <person name="Theologis A."/>
            <person name="Ecker J.R."/>
        </authorList>
    </citation>
    <scope>NUCLEOTIDE SEQUENCE [LARGE SCALE MRNA]</scope>
    <source>
        <strain>cv. Columbia</strain>
    </source>
</reference>
<reference key="5">
    <citation type="journal article" date="2004" name="Plant Cell">
        <title>Genome-wide analysis of Arabidopsis pentatricopeptide repeat proteins reveals their essential role in organelle biogenesis.</title>
        <authorList>
            <person name="Lurin C."/>
            <person name="Andres C."/>
            <person name="Aubourg S."/>
            <person name="Bellaoui M."/>
            <person name="Bitton F."/>
            <person name="Bruyere C."/>
            <person name="Caboche M."/>
            <person name="Debast C."/>
            <person name="Gualberto J."/>
            <person name="Hoffmann B."/>
            <person name="Lecharny A."/>
            <person name="Le Ret M."/>
            <person name="Martin-Magniette M.-L."/>
            <person name="Mireau H."/>
            <person name="Peeters N."/>
            <person name="Renou J.-P."/>
            <person name="Szurek B."/>
            <person name="Taconnat L."/>
            <person name="Small I."/>
        </authorList>
    </citation>
    <scope>GENE FAMILY</scope>
</reference>
<reference key="6">
    <citation type="journal article" date="2015" name="J. Exp. Bot.">
        <title>Identification of cleavage sites and substrate proteins for two mitochondrial intermediate peptidases in Arabidopsis thaliana.</title>
        <authorList>
            <person name="Carrie C."/>
            <person name="Venne A.S."/>
            <person name="Zahedi R.P."/>
            <person name="Soll J."/>
        </authorList>
    </citation>
    <scope>IDENTIFICATION BY MASS SPECTROMETRY</scope>
    <scope>CLEAVAGE OF TRANSIT PEPTIDE AFTER PHE-44</scope>
</reference>
<feature type="transit peptide" description="Mitochondrion" evidence="1">
    <location>
        <begin position="1"/>
        <end position="44"/>
    </location>
</feature>
<feature type="chain" id="PRO_0000342854" description="Pentatricopeptide repeat-containing protein At1g71210, mitochondrial">
    <location>
        <begin position="45"/>
        <end position="879"/>
    </location>
</feature>
<feature type="repeat" description="PPR 1">
    <location>
        <begin position="181"/>
        <end position="215"/>
    </location>
</feature>
<feature type="repeat" description="PPR 2">
    <location>
        <begin position="216"/>
        <end position="246"/>
    </location>
</feature>
<feature type="repeat" description="PPR 3">
    <location>
        <begin position="250"/>
        <end position="280"/>
    </location>
</feature>
<feature type="repeat" description="PPR 4">
    <location>
        <begin position="285"/>
        <end position="319"/>
    </location>
</feature>
<feature type="repeat" description="PPR 5">
    <location>
        <begin position="320"/>
        <end position="355"/>
    </location>
</feature>
<feature type="repeat" description="PPR 6">
    <location>
        <begin position="356"/>
        <end position="390"/>
    </location>
</feature>
<feature type="repeat" description="PPR 7">
    <location>
        <begin position="391"/>
        <end position="425"/>
    </location>
</feature>
<feature type="repeat" description="PPR 8">
    <location>
        <begin position="426"/>
        <end position="460"/>
    </location>
</feature>
<feature type="repeat" description="PPR 9">
    <location>
        <begin position="461"/>
        <end position="495"/>
    </location>
</feature>
<feature type="repeat" description="PPR 10">
    <location>
        <begin position="496"/>
        <end position="530"/>
    </location>
</feature>
<feature type="repeat" description="PPR 11">
    <location>
        <begin position="531"/>
        <end position="565"/>
    </location>
</feature>
<feature type="repeat" description="PPR 12">
    <location>
        <begin position="566"/>
        <end position="597"/>
    </location>
</feature>
<feature type="repeat" description="PPR 13">
    <location>
        <begin position="602"/>
        <end position="636"/>
    </location>
</feature>
<feature type="repeat" description="PPR 14">
    <location>
        <begin position="637"/>
        <end position="667"/>
    </location>
</feature>
<feature type="repeat" description="PPR 15">
    <location>
        <begin position="671"/>
        <end position="705"/>
    </location>
</feature>
<feature type="repeat" description="PPR 16">
    <location>
        <begin position="706"/>
        <end position="740"/>
    </location>
</feature>
<gene>
    <name type="ordered locus">At1g71210</name>
    <name type="ORF">F23N20.20</name>
</gene>
<name>PP113_ARATH</name>
<accession>Q8GZA6</accession>
<accession>Q9C987</accession>
<dbReference type="EMBL" id="AC016972">
    <property type="protein sequence ID" value="AAG51690.1"/>
    <property type="status" value="ALT_INIT"/>
    <property type="molecule type" value="Genomic_DNA"/>
</dbReference>
<dbReference type="EMBL" id="CP002684">
    <property type="protein sequence ID" value="AEE35173.1"/>
    <property type="molecule type" value="Genomic_DNA"/>
</dbReference>
<dbReference type="EMBL" id="AK117109">
    <property type="protein sequence ID" value="BAC41788.1"/>
    <property type="molecule type" value="mRNA"/>
</dbReference>
<dbReference type="EMBL" id="BT005973">
    <property type="protein sequence ID" value="AAO64908.1"/>
    <property type="molecule type" value="mRNA"/>
</dbReference>
<dbReference type="RefSeq" id="NP_177277.2">
    <property type="nucleotide sequence ID" value="NM_105790.3"/>
</dbReference>
<dbReference type="SMR" id="Q8GZA6"/>
<dbReference type="FunCoup" id="Q8GZA6">
    <property type="interactions" value="887"/>
</dbReference>
<dbReference type="STRING" id="3702.Q8GZA6"/>
<dbReference type="GlyGen" id="Q8GZA6">
    <property type="glycosylation" value="1 site"/>
</dbReference>
<dbReference type="iPTMnet" id="Q8GZA6"/>
<dbReference type="PaxDb" id="3702-AT1G71210.1"/>
<dbReference type="ProteomicsDB" id="249061"/>
<dbReference type="EnsemblPlants" id="AT1G71210.1">
    <property type="protein sequence ID" value="AT1G71210.1"/>
    <property type="gene ID" value="AT1G71210"/>
</dbReference>
<dbReference type="GeneID" id="843461"/>
<dbReference type="Gramene" id="AT1G71210.1">
    <property type="protein sequence ID" value="AT1G71210.1"/>
    <property type="gene ID" value="AT1G71210"/>
</dbReference>
<dbReference type="KEGG" id="ath:AT1G71210"/>
<dbReference type="Araport" id="AT1G71210"/>
<dbReference type="TAIR" id="AT1G71210"/>
<dbReference type="eggNOG" id="KOG4197">
    <property type="taxonomic scope" value="Eukaryota"/>
</dbReference>
<dbReference type="HOGENOM" id="CLU_002706_49_2_1"/>
<dbReference type="InParanoid" id="Q8GZA6"/>
<dbReference type="OMA" id="RWMEAMH"/>
<dbReference type="PhylomeDB" id="Q8GZA6"/>
<dbReference type="PRO" id="PR:Q8GZA6"/>
<dbReference type="Proteomes" id="UP000006548">
    <property type="component" value="Chromosome 1"/>
</dbReference>
<dbReference type="ExpressionAtlas" id="Q8GZA6">
    <property type="expression patterns" value="baseline and differential"/>
</dbReference>
<dbReference type="GO" id="GO:0005739">
    <property type="term" value="C:mitochondrion"/>
    <property type="evidence" value="ECO:0007669"/>
    <property type="project" value="UniProtKB-SubCell"/>
</dbReference>
<dbReference type="GO" id="GO:0003729">
    <property type="term" value="F:mRNA binding"/>
    <property type="evidence" value="ECO:0000314"/>
    <property type="project" value="TAIR"/>
</dbReference>
<dbReference type="Gene3D" id="1.25.40.10">
    <property type="entry name" value="Tetratricopeptide repeat domain"/>
    <property type="match status" value="6"/>
</dbReference>
<dbReference type="InterPro" id="IPR002885">
    <property type="entry name" value="Pentatricopeptide_rpt"/>
</dbReference>
<dbReference type="InterPro" id="IPR050872">
    <property type="entry name" value="PPR_P_subfamily"/>
</dbReference>
<dbReference type="InterPro" id="IPR011990">
    <property type="entry name" value="TPR-like_helical_dom_sf"/>
</dbReference>
<dbReference type="NCBIfam" id="TIGR00756">
    <property type="entry name" value="PPR"/>
    <property type="match status" value="2"/>
</dbReference>
<dbReference type="PANTHER" id="PTHR46128">
    <property type="entry name" value="MITOCHONDRIAL GROUP I INTRON SPLICING FACTOR CCM1"/>
    <property type="match status" value="1"/>
</dbReference>
<dbReference type="PANTHER" id="PTHR46128:SF329">
    <property type="entry name" value="MITOCHONDRIAL GROUP I INTRON SPLICING FACTOR DMR1"/>
    <property type="match status" value="1"/>
</dbReference>
<dbReference type="Pfam" id="PF01535">
    <property type="entry name" value="PPR"/>
    <property type="match status" value="6"/>
</dbReference>
<dbReference type="Pfam" id="PF13041">
    <property type="entry name" value="PPR_2"/>
    <property type="match status" value="1"/>
</dbReference>
<dbReference type="PROSITE" id="PS51375">
    <property type="entry name" value="PPR"/>
    <property type="match status" value="15"/>
</dbReference>
<keyword id="KW-0496">Mitochondrion</keyword>
<keyword id="KW-1185">Reference proteome</keyword>
<keyword id="KW-0677">Repeat</keyword>
<keyword id="KW-0809">Transit peptide</keyword>
<sequence length="879" mass="100431">MLRCWSVTVERSCEGMLLRRRILSLSASSFRNFTSGNNGDAIPFSTFTKPSSSIAPGDFLVREWKDWFKHRDVKQSHQLIDRIFDILRAPSNDGDDRAFYLHLSNLRLRLTEKFVLDVLSHTRYDILCCLKFFDWAARQPGFHHTRATFHAIFKILRGAKLVTLMIDFLDRSVGFESCRHSLRLCDALVVGYAVAGRTDIALQHFGNMRFRGLDLDSFGYHVLLNALVEEKCFDSFDVIFDQISVRGFVCAVTHSILVKKFCKQGKLDEAEDYLRALLPNDPAGCGSGLGILVDALCSKRKFQEATKLLDEIKLVGTVNMDRAYNIWIRALIKAGFLNNPADFLQKISPLEGCELEVFRYNSMVFQLLKENNLDGVYDILTEMMVRGVSPNKKTMNAALCFFCKAGFVDEALELYRSRSEIGFAPTAMSYNYLIHTLCANESVEQAYDVLKGAIDRGHFLGGKTFSTLTNALCWKGKPDMARELVIAAAERDLLPKRIAGCKIISALCDVGKVEDALMINELFNKSGVDTSFKMFTSLIYGSITLMRGDIAAKLIIRMQEKGYTPTRSLYRNVIQCVCEMESGEKNFFTTLLKFQLSLWEHKVQAYNLFIEGAGFAGKPKLARLVYDMMDRDGITPTVASNILMLQSYLKNEKIADALHFFHDLREQGKTKKRLYQVMIVGLCKANKLDDAMHFLEEMKGEGLQPSIECYEVNIQKLCNEEKYDEAVGLVNEFRKSGRRITAFIGNVLLHNAMKSKGVYEAWTRMRNIEDKIPEMKSLGELIGLFSGRIDMEVELKRLDEVIEKCYPLDMYTYNMLLRMIVMNQAEDAYEMVERIARRGYVPNERTDMILERANRILEERNSRSNLGRNGWNSRQRQLE</sequence>